<name>CHFR_DANRE</name>
<reference key="1">
    <citation type="journal article" date="2013" name="Nature">
        <title>The zebrafish reference genome sequence and its relationship to the human genome.</title>
        <authorList>
            <person name="Howe K."/>
            <person name="Clark M.D."/>
            <person name="Torroja C.F."/>
            <person name="Torrance J."/>
            <person name="Berthelot C."/>
            <person name="Muffato M."/>
            <person name="Collins J.E."/>
            <person name="Humphray S."/>
            <person name="McLaren K."/>
            <person name="Matthews L."/>
            <person name="McLaren S."/>
            <person name="Sealy I."/>
            <person name="Caccamo M."/>
            <person name="Churcher C."/>
            <person name="Scott C."/>
            <person name="Barrett J.C."/>
            <person name="Koch R."/>
            <person name="Rauch G.J."/>
            <person name="White S."/>
            <person name="Chow W."/>
            <person name="Kilian B."/>
            <person name="Quintais L.T."/>
            <person name="Guerra-Assuncao J.A."/>
            <person name="Zhou Y."/>
            <person name="Gu Y."/>
            <person name="Yen J."/>
            <person name="Vogel J.H."/>
            <person name="Eyre T."/>
            <person name="Redmond S."/>
            <person name="Banerjee R."/>
            <person name="Chi J."/>
            <person name="Fu B."/>
            <person name="Langley E."/>
            <person name="Maguire S.F."/>
            <person name="Laird G.K."/>
            <person name="Lloyd D."/>
            <person name="Kenyon E."/>
            <person name="Donaldson S."/>
            <person name="Sehra H."/>
            <person name="Almeida-King J."/>
            <person name="Loveland J."/>
            <person name="Trevanion S."/>
            <person name="Jones M."/>
            <person name="Quail M."/>
            <person name="Willey D."/>
            <person name="Hunt A."/>
            <person name="Burton J."/>
            <person name="Sims S."/>
            <person name="McLay K."/>
            <person name="Plumb B."/>
            <person name="Davis J."/>
            <person name="Clee C."/>
            <person name="Oliver K."/>
            <person name="Clark R."/>
            <person name="Riddle C."/>
            <person name="Elliot D."/>
            <person name="Threadgold G."/>
            <person name="Harden G."/>
            <person name="Ware D."/>
            <person name="Begum S."/>
            <person name="Mortimore B."/>
            <person name="Kerry G."/>
            <person name="Heath P."/>
            <person name="Phillimore B."/>
            <person name="Tracey A."/>
            <person name="Corby N."/>
            <person name="Dunn M."/>
            <person name="Johnson C."/>
            <person name="Wood J."/>
            <person name="Clark S."/>
            <person name="Pelan S."/>
            <person name="Griffiths G."/>
            <person name="Smith M."/>
            <person name="Glithero R."/>
            <person name="Howden P."/>
            <person name="Barker N."/>
            <person name="Lloyd C."/>
            <person name="Stevens C."/>
            <person name="Harley J."/>
            <person name="Holt K."/>
            <person name="Panagiotidis G."/>
            <person name="Lovell J."/>
            <person name="Beasley H."/>
            <person name="Henderson C."/>
            <person name="Gordon D."/>
            <person name="Auger K."/>
            <person name="Wright D."/>
            <person name="Collins J."/>
            <person name="Raisen C."/>
            <person name="Dyer L."/>
            <person name="Leung K."/>
            <person name="Robertson L."/>
            <person name="Ambridge K."/>
            <person name="Leongamornlert D."/>
            <person name="McGuire S."/>
            <person name="Gilderthorp R."/>
            <person name="Griffiths C."/>
            <person name="Manthravadi D."/>
            <person name="Nichol S."/>
            <person name="Barker G."/>
            <person name="Whitehead S."/>
            <person name="Kay M."/>
            <person name="Brown J."/>
            <person name="Murnane C."/>
            <person name="Gray E."/>
            <person name="Humphries M."/>
            <person name="Sycamore N."/>
            <person name="Barker D."/>
            <person name="Saunders D."/>
            <person name="Wallis J."/>
            <person name="Babbage A."/>
            <person name="Hammond S."/>
            <person name="Mashreghi-Mohammadi M."/>
            <person name="Barr L."/>
            <person name="Martin S."/>
            <person name="Wray P."/>
            <person name="Ellington A."/>
            <person name="Matthews N."/>
            <person name="Ellwood M."/>
            <person name="Woodmansey R."/>
            <person name="Clark G."/>
            <person name="Cooper J."/>
            <person name="Tromans A."/>
            <person name="Grafham D."/>
            <person name="Skuce C."/>
            <person name="Pandian R."/>
            <person name="Andrews R."/>
            <person name="Harrison E."/>
            <person name="Kimberley A."/>
            <person name="Garnett J."/>
            <person name="Fosker N."/>
            <person name="Hall R."/>
            <person name="Garner P."/>
            <person name="Kelly D."/>
            <person name="Bird C."/>
            <person name="Palmer S."/>
            <person name="Gehring I."/>
            <person name="Berger A."/>
            <person name="Dooley C.M."/>
            <person name="Ersan-Urun Z."/>
            <person name="Eser C."/>
            <person name="Geiger H."/>
            <person name="Geisler M."/>
            <person name="Karotki L."/>
            <person name="Kirn A."/>
            <person name="Konantz J."/>
            <person name="Konantz M."/>
            <person name="Oberlander M."/>
            <person name="Rudolph-Geiger S."/>
            <person name="Teucke M."/>
            <person name="Lanz C."/>
            <person name="Raddatz G."/>
            <person name="Osoegawa K."/>
            <person name="Zhu B."/>
            <person name="Rapp A."/>
            <person name="Widaa S."/>
            <person name="Langford C."/>
            <person name="Yang F."/>
            <person name="Schuster S.C."/>
            <person name="Carter N.P."/>
            <person name="Harrow J."/>
            <person name="Ning Z."/>
            <person name="Herrero J."/>
            <person name="Searle S.M."/>
            <person name="Enright A."/>
            <person name="Geisler R."/>
            <person name="Plasterk R.H."/>
            <person name="Lee C."/>
            <person name="Westerfield M."/>
            <person name="de Jong P.J."/>
            <person name="Zon L.I."/>
            <person name="Postlethwait J.H."/>
            <person name="Nusslein-Volhard C."/>
            <person name="Hubbard T.J."/>
            <person name="Roest Crollius H."/>
            <person name="Rogers J."/>
            <person name="Stemple D.L."/>
        </authorList>
    </citation>
    <scope>NUCLEOTIDE SEQUENCE [LARGE SCALE GENOMIC DNA]</scope>
    <source>
        <strain>Tuebingen</strain>
    </source>
</reference>
<reference key="2">
    <citation type="submission" date="2007-09" db="EMBL/GenBank/DDBJ databases">
        <authorList>
            <consortium name="NIH - Zebrafish Gene Collection (ZGC) project"/>
        </authorList>
    </citation>
    <scope>NUCLEOTIDE SEQUENCE [LARGE SCALE MRNA] (ISOFORM 2)</scope>
    <source>
        <tissue>Testis</tissue>
    </source>
</reference>
<accession>A5WW08</accession>
<accession>A8E4S5</accession>
<proteinExistence type="evidence at transcript level"/>
<feature type="chain" id="PRO_0000385302" description="E3 ubiquitin-protein ligase CHFR">
    <location>
        <begin position="1"/>
        <end position="637"/>
    </location>
</feature>
<feature type="domain" description="FHA" evidence="2">
    <location>
        <begin position="31"/>
        <end position="82"/>
    </location>
</feature>
<feature type="zinc finger region" description="RING-type" evidence="3">
    <location>
        <begin position="277"/>
        <end position="316"/>
    </location>
</feature>
<feature type="zinc finger region" description="PBZ-type">
    <location>
        <begin position="606"/>
        <end position="628"/>
    </location>
</feature>
<feature type="region of interest" description="Disordered" evidence="4">
    <location>
        <begin position="120"/>
        <end position="172"/>
    </location>
</feature>
<feature type="region of interest" description="Disordered" evidence="4">
    <location>
        <begin position="193"/>
        <end position="267"/>
    </location>
</feature>
<feature type="region of interest" description="Disordered" evidence="4">
    <location>
        <begin position="428"/>
        <end position="447"/>
    </location>
</feature>
<feature type="compositionally biased region" description="Acidic residues" evidence="4">
    <location>
        <begin position="130"/>
        <end position="142"/>
    </location>
</feature>
<feature type="compositionally biased region" description="Polar residues" evidence="4">
    <location>
        <begin position="193"/>
        <end position="210"/>
    </location>
</feature>
<feature type="compositionally biased region" description="Basic and acidic residues" evidence="4">
    <location>
        <begin position="258"/>
        <end position="267"/>
    </location>
</feature>
<feature type="compositionally biased region" description="Low complexity" evidence="4">
    <location>
        <begin position="429"/>
        <end position="445"/>
    </location>
</feature>
<feature type="splice variant" id="VSP_038139" description="In isoform 2." evidence="5">
    <location>
        <position position="443"/>
    </location>
</feature>
<feature type="sequence conflict" description="In Ref. 2; AAI53312." evidence="6" ref="2">
    <original>N</original>
    <variation>I</variation>
    <location>
        <position position="61"/>
    </location>
</feature>
<feature type="sequence conflict" description="In Ref. 2; AAI53312." evidence="6" ref="2">
    <original>K</original>
    <variation>Q</variation>
    <location>
        <position position="64"/>
    </location>
</feature>
<feature type="sequence conflict" description="In Ref. 2; AAI53312." evidence="6" ref="2">
    <original>N</original>
    <variation>I</variation>
    <location>
        <position position="176"/>
    </location>
</feature>
<feature type="sequence conflict" description="In Ref. 2; AAI53312." evidence="6" ref="2">
    <original>G</original>
    <variation>R</variation>
    <location>
        <position position="200"/>
    </location>
</feature>
<feature type="sequence conflict" description="In Ref. 2; AAI53312." evidence="6" ref="2">
    <original>S</original>
    <variation>P</variation>
    <location>
        <position position="204"/>
    </location>
</feature>
<organism>
    <name type="scientific">Danio rerio</name>
    <name type="common">Zebrafish</name>
    <name type="synonym">Brachydanio rerio</name>
    <dbReference type="NCBI Taxonomy" id="7955"/>
    <lineage>
        <taxon>Eukaryota</taxon>
        <taxon>Metazoa</taxon>
        <taxon>Chordata</taxon>
        <taxon>Craniata</taxon>
        <taxon>Vertebrata</taxon>
        <taxon>Euteleostomi</taxon>
        <taxon>Actinopterygii</taxon>
        <taxon>Neopterygii</taxon>
        <taxon>Teleostei</taxon>
        <taxon>Ostariophysi</taxon>
        <taxon>Cypriniformes</taxon>
        <taxon>Danionidae</taxon>
        <taxon>Danioninae</taxon>
        <taxon>Danio</taxon>
    </lineage>
</organism>
<gene>
    <name type="primary">chfr</name>
    <name type="ORF">si:dkey-69h6.7</name>
</gene>
<sequence>MTNQDSDQAWGKLVKVDASPGSEIVLINSECTVGRKKDCDLSFPANKLVSGNHCKITHDQNSGKVWLEDMSTNGTVINMSKVVKKQTHLLQNGDVIYFVYRKNEPEQNIAYVYQSITPQESASHDVEDAGREEDSDLTETESEPAPVEPVIVKPLPQSGHEDPQPSTSSSSLHFYNMPLSTCSDVSARKNPVSSSAVCKGDSTSSGSPAQTRLKWTCWTDGEPEEEMQRKRRKTDRDDPGFGSAHSDASADIPLRGASGKEKTEGATTDKMEESLTCIICQDLLYDCISVQPCMHTFCAACYSGWMERSSFCPTCRCPVERIRKNHILNNLVEAYLLQHPEKCRTEDDLRSMDARNKITQDMLQPKVERSFSDEEASSDYLFELSDNDSDISDMSQPYMMCRQCPGYRKELSSALWICESAQSESLAKTAGDGPSTSSDSTTAAPQEFRCPPQASHLICTCCLQPMPDRRFEHLPPQVSPQHCLVCQKPFCHVYWGCPRIGCHGCLARFSELNLNDKCLDGVFNGNQYESEVLQNYLSCRGMSWRHLLQDSLQALQQGLYHLSDYRITANSFLCYCCGLRTFRELAYKYRERIPPSELPDAVTNRPNCYWGRNCRTQVKAHHALKFNHICEQTRFKN</sequence>
<evidence type="ECO:0000250" key="1">
    <source>
        <dbReference type="UniProtKB" id="Q96EP1"/>
    </source>
</evidence>
<evidence type="ECO:0000255" key="2">
    <source>
        <dbReference type="PROSITE-ProRule" id="PRU00086"/>
    </source>
</evidence>
<evidence type="ECO:0000255" key="3">
    <source>
        <dbReference type="PROSITE-ProRule" id="PRU00175"/>
    </source>
</evidence>
<evidence type="ECO:0000256" key="4">
    <source>
        <dbReference type="SAM" id="MobiDB-lite"/>
    </source>
</evidence>
<evidence type="ECO:0000303" key="5">
    <source ref="2"/>
</evidence>
<evidence type="ECO:0000305" key="6"/>
<keyword id="KW-0025">Alternative splicing</keyword>
<keyword id="KW-0131">Cell cycle</keyword>
<keyword id="KW-0132">Cell division</keyword>
<keyword id="KW-0479">Metal-binding</keyword>
<keyword id="KW-0498">Mitosis</keyword>
<keyword id="KW-0539">Nucleus</keyword>
<keyword id="KW-1185">Reference proteome</keyword>
<keyword id="KW-0808">Transferase</keyword>
<keyword id="KW-0833">Ubl conjugation pathway</keyword>
<keyword id="KW-0862">Zinc</keyword>
<keyword id="KW-0863">Zinc-finger</keyword>
<protein>
    <recommendedName>
        <fullName>E3 ubiquitin-protein ligase CHFR</fullName>
        <ecNumber evidence="1">2.3.2.27</ecNumber>
    </recommendedName>
    <alternativeName>
        <fullName>Checkpoint with forkhead and RING finger domains protein</fullName>
    </alternativeName>
    <alternativeName>
        <fullName evidence="6">RING-type E3 ubiquitin transferase CHFR</fullName>
    </alternativeName>
</protein>
<comment type="function">
    <text evidence="1">E3 ubiquitin-protein ligase that functions in the antephase checkpoint by actively delaying passage into mitosis in response to microtubule poisons. Acts in early prophase before chromosome condensation, when the centrosome move apart from each other along the periphery of the nucleus. Probably involved in signaling the presence of mitotic stress caused by microtubule poisons by mediating the 'Lys-48'-linked ubiquitination of target proteins, leading to their degradation by the proteasome. May also promote the formation of 'Lys-63'-linked polyubiquitin chains and functions with the specific ubiquitin-conjugating ubc13-mms2 (ube2n-ube2v2) heterodimer. Substrates that are polyubiquitinated at 'Lys-63' are usually not targeted for degradation, but are rather involved in signaling cellular stress.</text>
</comment>
<comment type="catalytic activity">
    <reaction evidence="1">
        <text>S-ubiquitinyl-[E2 ubiquitin-conjugating enzyme]-L-cysteine + [acceptor protein]-L-lysine = [E2 ubiquitin-conjugating enzyme]-L-cysteine + N(6)-ubiquitinyl-[acceptor protein]-L-lysine.</text>
        <dbReference type="EC" id="2.3.2.27"/>
    </reaction>
</comment>
<comment type="pathway">
    <text>Protein modification; protein ubiquitination.</text>
</comment>
<comment type="subcellular location">
    <subcellularLocation>
        <location evidence="1">Nucleus</location>
        <location evidence="1">PML body</location>
    </subcellularLocation>
</comment>
<comment type="alternative products">
    <event type="alternative splicing"/>
    <isoform>
        <id>A5WW08-1</id>
        <name>1</name>
        <sequence type="displayed"/>
    </isoform>
    <isoform>
        <id>A5WW08-2</id>
        <name>2</name>
        <sequence type="described" ref="VSP_038139"/>
    </isoform>
</comment>
<comment type="domain">
    <text evidence="1">The PBZ-type zinc finger (also named CYR) mediates non-covalent poly(ADP-ribose)-binding. Poly(ADP-ribose)-binding is dependent on the presence of zinc and is required for its function in antephase checkpoint.</text>
</comment>
<comment type="domain">
    <text evidence="1">The FHA domain plays a key role in the anti-proliferative properties of the protein and is involved in initiating a cell cycle arrest at G2/M.</text>
</comment>
<comment type="similarity">
    <text evidence="6">Belongs to the CHFR family.</text>
</comment>
<dbReference type="EC" id="2.3.2.27" evidence="1"/>
<dbReference type="EMBL" id="CT573109">
    <property type="protein sequence ID" value="CAN88580.1"/>
    <property type="molecule type" value="Genomic_DNA"/>
</dbReference>
<dbReference type="EMBL" id="BC153311">
    <property type="protein sequence ID" value="AAI53312.1"/>
    <property type="molecule type" value="mRNA"/>
</dbReference>
<dbReference type="RefSeq" id="NP_001093485.1">
    <molecule id="A5WW08-1"/>
    <property type="nucleotide sequence ID" value="NM_001100015.1"/>
</dbReference>
<dbReference type="RefSeq" id="XP_017211627.1">
    <molecule id="A5WW08-1"/>
    <property type="nucleotide sequence ID" value="XM_017356138.3"/>
</dbReference>
<dbReference type="RefSeq" id="XP_017211628.1">
    <molecule id="A5WW08-2"/>
    <property type="nucleotide sequence ID" value="XM_017356139.3"/>
</dbReference>
<dbReference type="RefSeq" id="XP_021331941.1">
    <molecule id="A5WW08-2"/>
    <property type="nucleotide sequence ID" value="XM_021476266.2"/>
</dbReference>
<dbReference type="SMR" id="A5WW08"/>
<dbReference type="FunCoup" id="A5WW08">
    <property type="interactions" value="792"/>
</dbReference>
<dbReference type="STRING" id="7955.ENSDARP00000099431"/>
<dbReference type="PaxDb" id="7955-ENSDARP00000099431"/>
<dbReference type="Ensembl" id="ENSDART00000110783">
    <molecule id="A5WW08-1"/>
    <property type="protein sequence ID" value="ENSDARP00000099431"/>
    <property type="gene ID" value="ENSDARG00000075347"/>
</dbReference>
<dbReference type="GeneID" id="564271"/>
<dbReference type="KEGG" id="dre:564271"/>
<dbReference type="AGR" id="ZFIN:ZDB-GENE-030131-3522"/>
<dbReference type="CTD" id="55743"/>
<dbReference type="ZFIN" id="ZDB-GENE-030131-3522">
    <property type="gene designation" value="chfr"/>
</dbReference>
<dbReference type="eggNOG" id="KOG0802">
    <property type="taxonomic scope" value="Eukaryota"/>
</dbReference>
<dbReference type="HOGENOM" id="CLU_032966_0_0_1"/>
<dbReference type="InParanoid" id="A5WW08"/>
<dbReference type="OMA" id="SNYWFPG"/>
<dbReference type="OrthoDB" id="1305878at2759"/>
<dbReference type="PhylomeDB" id="A5WW08"/>
<dbReference type="TreeFam" id="TF330957"/>
<dbReference type="UniPathway" id="UPA00143"/>
<dbReference type="PRO" id="PR:A5WW08"/>
<dbReference type="Proteomes" id="UP000000437">
    <property type="component" value="Chromosome 5"/>
</dbReference>
<dbReference type="Bgee" id="ENSDARG00000075347">
    <property type="expression patterns" value="Expressed in ovary and 33 other cell types or tissues"/>
</dbReference>
<dbReference type="GO" id="GO:0005634">
    <property type="term" value="C:nucleus"/>
    <property type="evidence" value="ECO:0000250"/>
    <property type="project" value="UniProtKB"/>
</dbReference>
<dbReference type="GO" id="GO:0016605">
    <property type="term" value="C:PML body"/>
    <property type="evidence" value="ECO:0000250"/>
    <property type="project" value="UniProtKB"/>
</dbReference>
<dbReference type="GO" id="GO:0000166">
    <property type="term" value="F:nucleotide binding"/>
    <property type="evidence" value="ECO:0000250"/>
    <property type="project" value="UniProtKB"/>
</dbReference>
<dbReference type="GO" id="GO:0004842">
    <property type="term" value="F:ubiquitin-protein transferase activity"/>
    <property type="evidence" value="ECO:0000250"/>
    <property type="project" value="UniProtKB"/>
</dbReference>
<dbReference type="GO" id="GO:0008270">
    <property type="term" value="F:zinc ion binding"/>
    <property type="evidence" value="ECO:0007669"/>
    <property type="project" value="UniProtKB-KW"/>
</dbReference>
<dbReference type="GO" id="GO:0051301">
    <property type="term" value="P:cell division"/>
    <property type="evidence" value="ECO:0007669"/>
    <property type="project" value="UniProtKB-KW"/>
</dbReference>
<dbReference type="GO" id="GO:0044818">
    <property type="term" value="P:mitotic G2/M transition checkpoint"/>
    <property type="evidence" value="ECO:0000250"/>
    <property type="project" value="UniProtKB"/>
</dbReference>
<dbReference type="GO" id="GO:0016567">
    <property type="term" value="P:protein ubiquitination"/>
    <property type="evidence" value="ECO:0007669"/>
    <property type="project" value="UniProtKB-UniPathway"/>
</dbReference>
<dbReference type="GO" id="GO:0006511">
    <property type="term" value="P:ubiquitin-dependent protein catabolic process"/>
    <property type="evidence" value="ECO:0000250"/>
    <property type="project" value="UniProtKB"/>
</dbReference>
<dbReference type="CDD" id="cd22672">
    <property type="entry name" value="FHA_CHFR"/>
    <property type="match status" value="1"/>
</dbReference>
<dbReference type="CDD" id="cd16503">
    <property type="entry name" value="RING-HC_CHFR"/>
    <property type="match status" value="1"/>
</dbReference>
<dbReference type="FunFam" id="3.30.40.10:FF:001655">
    <property type="entry name" value="Checkpoint with forkhead and ring finger domains, E3 ubiquitin protein ligase"/>
    <property type="match status" value="1"/>
</dbReference>
<dbReference type="FunFam" id="3.30.40.140:FF:000001">
    <property type="entry name" value="E3 ubiquitin-protein ligase CHFR isoform X1"/>
    <property type="match status" value="1"/>
</dbReference>
<dbReference type="FunFam" id="2.60.200.20:FF:000022">
    <property type="entry name" value="E3 ubiquitin-protein ligase CHFR isoform X2"/>
    <property type="match status" value="1"/>
</dbReference>
<dbReference type="Gene3D" id="2.60.200.20">
    <property type="match status" value="1"/>
</dbReference>
<dbReference type="Gene3D" id="3.30.40.140">
    <property type="match status" value="1"/>
</dbReference>
<dbReference type="Gene3D" id="3.30.40.10">
    <property type="entry name" value="Zinc/RING finger domain, C3HC4 (zinc finger)"/>
    <property type="match status" value="1"/>
</dbReference>
<dbReference type="InterPro" id="IPR040909">
    <property type="entry name" value="CHFR_Znf-CRD"/>
</dbReference>
<dbReference type="InterPro" id="IPR052256">
    <property type="entry name" value="E3_ubiquitin-ligase_CHFR"/>
</dbReference>
<dbReference type="InterPro" id="IPR000253">
    <property type="entry name" value="FHA_dom"/>
</dbReference>
<dbReference type="InterPro" id="IPR008984">
    <property type="entry name" value="SMAD_FHA_dom_sf"/>
</dbReference>
<dbReference type="InterPro" id="IPR001841">
    <property type="entry name" value="Znf_RING"/>
</dbReference>
<dbReference type="InterPro" id="IPR013083">
    <property type="entry name" value="Znf_RING/FYVE/PHD"/>
</dbReference>
<dbReference type="InterPro" id="IPR017907">
    <property type="entry name" value="Znf_RING_CS"/>
</dbReference>
<dbReference type="PANTHER" id="PTHR16079:SF4">
    <property type="entry name" value="E3 UBIQUITIN-PROTEIN LIGASE CHFR"/>
    <property type="match status" value="1"/>
</dbReference>
<dbReference type="PANTHER" id="PTHR16079">
    <property type="entry name" value="UBIQUITIN LIGASE PROTEIN CHFR"/>
    <property type="match status" value="1"/>
</dbReference>
<dbReference type="Pfam" id="PF00498">
    <property type="entry name" value="FHA"/>
    <property type="match status" value="1"/>
</dbReference>
<dbReference type="Pfam" id="PF13923">
    <property type="entry name" value="zf-C3HC4_2"/>
    <property type="match status" value="1"/>
</dbReference>
<dbReference type="Pfam" id="PF17979">
    <property type="entry name" value="zf-CRD"/>
    <property type="match status" value="1"/>
</dbReference>
<dbReference type="SMART" id="SM00240">
    <property type="entry name" value="FHA"/>
    <property type="match status" value="1"/>
</dbReference>
<dbReference type="SMART" id="SM00184">
    <property type="entry name" value="RING"/>
    <property type="match status" value="1"/>
</dbReference>
<dbReference type="SUPFAM" id="SSF57850">
    <property type="entry name" value="RING/U-box"/>
    <property type="match status" value="1"/>
</dbReference>
<dbReference type="SUPFAM" id="SSF49879">
    <property type="entry name" value="SMAD/FHA domain"/>
    <property type="match status" value="1"/>
</dbReference>
<dbReference type="PROSITE" id="PS50006">
    <property type="entry name" value="FHA_DOMAIN"/>
    <property type="match status" value="1"/>
</dbReference>
<dbReference type="PROSITE" id="PS00518">
    <property type="entry name" value="ZF_RING_1"/>
    <property type="match status" value="1"/>
</dbReference>
<dbReference type="PROSITE" id="PS50089">
    <property type="entry name" value="ZF_RING_2"/>
    <property type="match status" value="1"/>
</dbReference>